<organism>
    <name type="scientific">Arabidopsis thaliana</name>
    <name type="common">Mouse-ear cress</name>
    <dbReference type="NCBI Taxonomy" id="3702"/>
    <lineage>
        <taxon>Eukaryota</taxon>
        <taxon>Viridiplantae</taxon>
        <taxon>Streptophyta</taxon>
        <taxon>Embryophyta</taxon>
        <taxon>Tracheophyta</taxon>
        <taxon>Spermatophyta</taxon>
        <taxon>Magnoliopsida</taxon>
        <taxon>eudicotyledons</taxon>
        <taxon>Gunneridae</taxon>
        <taxon>Pentapetalae</taxon>
        <taxon>rosids</taxon>
        <taxon>malvids</taxon>
        <taxon>Brassicales</taxon>
        <taxon>Brassicaceae</taxon>
        <taxon>Camelineae</taxon>
        <taxon>Arabidopsis</taxon>
    </lineage>
</organism>
<protein>
    <recommendedName>
        <fullName>Xanthine dehydrogenase 1</fullName>
        <shortName>AtXDH1</shortName>
        <ecNumber evidence="4">1.17.1.4</ecNumber>
    </recommendedName>
</protein>
<gene>
    <name type="primary">XDH1</name>
    <name type="ordered locus">At4g34890</name>
    <name type="ORF">T11I11.130</name>
</gene>
<feature type="chain" id="PRO_0000417457" description="Xanthine dehydrogenase 1">
    <location>
        <begin position="1"/>
        <end position="1361"/>
    </location>
</feature>
<feature type="domain" description="2Fe-2S ferredoxin-type" evidence="2">
    <location>
        <begin position="15"/>
        <end position="101"/>
    </location>
</feature>
<feature type="domain" description="FAD-binding PCMH-type" evidence="3">
    <location>
        <begin position="257"/>
        <end position="442"/>
    </location>
</feature>
<feature type="active site" description="Proton acceptor" evidence="1">
    <location>
        <position position="1297"/>
    </location>
</feature>
<feature type="binding site" evidence="2">
    <location>
        <position position="53"/>
    </location>
    <ligand>
        <name>[2Fe-2S] cluster</name>
        <dbReference type="ChEBI" id="CHEBI:190135"/>
        <label>1</label>
    </ligand>
</feature>
<feature type="binding site" evidence="2">
    <location>
        <position position="58"/>
    </location>
    <ligand>
        <name>[2Fe-2S] cluster</name>
        <dbReference type="ChEBI" id="CHEBI:190135"/>
        <label>1</label>
    </ligand>
</feature>
<feature type="binding site" evidence="2">
    <location>
        <position position="61"/>
    </location>
    <ligand>
        <name>[2Fe-2S] cluster</name>
        <dbReference type="ChEBI" id="CHEBI:190135"/>
        <label>1</label>
    </ligand>
</feature>
<feature type="binding site" evidence="2">
    <location>
        <position position="83"/>
    </location>
    <ligand>
        <name>[2Fe-2S] cluster</name>
        <dbReference type="ChEBI" id="CHEBI:190135"/>
        <label>1</label>
    </ligand>
</feature>
<feature type="binding site" evidence="2">
    <location>
        <position position="123"/>
    </location>
    <ligand>
        <name>[2Fe-2S] cluster</name>
        <dbReference type="ChEBI" id="CHEBI:190135"/>
        <label>2</label>
    </ligand>
</feature>
<feature type="binding site" evidence="2">
    <location>
        <position position="126"/>
    </location>
    <ligand>
        <name>[2Fe-2S] cluster</name>
        <dbReference type="ChEBI" id="CHEBI:190135"/>
        <label>2</label>
    </ligand>
</feature>
<feature type="binding site" evidence="2">
    <location>
        <position position="159"/>
    </location>
    <ligand>
        <name>[2Fe-2S] cluster</name>
        <dbReference type="ChEBI" id="CHEBI:190135"/>
        <label>2</label>
    </ligand>
</feature>
<feature type="binding site" evidence="2">
    <location>
        <position position="161"/>
    </location>
    <ligand>
        <name>[2Fe-2S] cluster</name>
        <dbReference type="ChEBI" id="CHEBI:190135"/>
        <label>2</label>
    </ligand>
</feature>
<feature type="binding site" evidence="1">
    <location>
        <begin position="285"/>
        <end position="292"/>
    </location>
    <ligand>
        <name>FAD</name>
        <dbReference type="ChEBI" id="CHEBI:57692"/>
    </ligand>
</feature>
<feature type="binding site" evidence="1">
    <location>
        <position position="365"/>
    </location>
    <ligand>
        <name>FAD</name>
        <dbReference type="ChEBI" id="CHEBI:57692"/>
    </ligand>
</feature>
<feature type="binding site" evidence="1">
    <location>
        <begin position="375"/>
        <end position="379"/>
    </location>
    <ligand>
        <name>FAD</name>
        <dbReference type="ChEBI" id="CHEBI:57692"/>
    </ligand>
</feature>
<feature type="binding site" evidence="1">
    <location>
        <position position="388"/>
    </location>
    <ligand>
        <name>FAD</name>
        <dbReference type="ChEBI" id="CHEBI:57692"/>
    </ligand>
</feature>
<feature type="binding site" evidence="1">
    <location>
        <position position="432"/>
    </location>
    <ligand>
        <name>FAD</name>
        <dbReference type="ChEBI" id="CHEBI:57692"/>
    </ligand>
</feature>
<feature type="binding site" evidence="1">
    <location>
        <position position="450"/>
    </location>
    <ligand>
        <name>FAD</name>
        <dbReference type="ChEBI" id="CHEBI:57692"/>
    </ligand>
</feature>
<feature type="binding site" evidence="1">
    <location>
        <position position="796"/>
    </location>
    <ligand>
        <name>Mo-molybdopterin</name>
        <dbReference type="ChEBI" id="CHEBI:71302"/>
    </ligand>
    <ligandPart>
        <name>Mo</name>
        <dbReference type="ChEBI" id="CHEBI:28685"/>
    </ligandPart>
</feature>
<feature type="binding site" evidence="1">
    <location>
        <position position="827"/>
    </location>
    <ligand>
        <name>Mo-molybdopterin</name>
        <dbReference type="ChEBI" id="CHEBI:71302"/>
    </ligand>
    <ligandPart>
        <name>Mo</name>
        <dbReference type="ChEBI" id="CHEBI:28685"/>
    </ligandPart>
</feature>
<feature type="binding site" evidence="1">
    <location>
        <position position="831"/>
    </location>
    <ligand>
        <name>substrate</name>
    </ligand>
</feature>
<feature type="binding site" evidence="1">
    <location>
        <position position="909"/>
    </location>
    <ligand>
        <name>substrate</name>
    </ligand>
</feature>
<feature type="binding site" evidence="1">
    <location>
        <position position="941"/>
    </location>
    <ligand>
        <name>Mo-molybdopterin</name>
        <dbReference type="ChEBI" id="CHEBI:71302"/>
    </ligand>
    <ligandPart>
        <name>Mo</name>
        <dbReference type="ChEBI" id="CHEBI:28685"/>
    </ligandPart>
</feature>
<feature type="binding site" evidence="1">
    <location>
        <position position="943"/>
    </location>
    <ligand>
        <name>substrate</name>
    </ligand>
</feature>
<feature type="binding site" evidence="1">
    <location>
        <position position="1039"/>
    </location>
    <ligand>
        <name>substrate</name>
    </ligand>
</feature>
<feature type="binding site" evidence="1">
    <location>
        <position position="1108"/>
    </location>
    <ligand>
        <name>Mo-molybdopterin</name>
        <dbReference type="ChEBI" id="CHEBI:71302"/>
    </ligand>
    <ligandPart>
        <name>Mo</name>
        <dbReference type="ChEBI" id="CHEBI:28685"/>
    </ligandPart>
</feature>
<feature type="mutagenesis site" description="Decreases activity 8-fold." evidence="8">
    <original>W</original>
    <variation>A</variation>
    <location>
        <position position="364"/>
    </location>
</feature>
<feature type="mutagenesis site" description="Decreases activity 4-fold." evidence="8">
    <original>Y</original>
    <variation>A</variation>
    <location>
        <position position="421"/>
    </location>
</feature>
<feature type="mutagenesis site" description="Loss of activity." evidence="8">
    <original>E</original>
    <variation>A</variation>
    <location>
        <position position="831"/>
    </location>
</feature>
<feature type="mutagenesis site" description="Decreases activity 12-fold." evidence="8">
    <original>R</original>
    <variation>A</variation>
    <location>
        <position position="909"/>
    </location>
</feature>
<feature type="mutagenesis site" description="Decreases activity 40-fold." evidence="8">
    <original>E</original>
    <variation>A</variation>
    <location>
        <position position="1297"/>
    </location>
</feature>
<sequence length="1361" mass="149196">MGSLKKDGEIGDEFTEALLYVNGVRRVLPDGLAHMTLLEYLRDLGLTGTKLGCGEGGCGACTVMVSSYDRKSKTSVHYAVNACLAPLYSVEGMHVISIEGLGHRKLGLHPVQESLASSHGSQCGFCTPGFIMSMYSLLRSSKNSPSEEEIEECLAGNLCRCTGYRPIVDAFRVFAKSDDALYCGVSSLSLQDGSTICPSTGKPCSCGSKTTNEVASCNEDRFQSISYSDIDGAKYTDKELIFPPELLLRKLTPLKLRGNGGITWYRPVCLQNLLELKANYPDAKLLVGNTEVGIEMRLKRLQYQVLISVAQVPELNALNVNDNGIEVGSALRLSELLRLFRKIVKERPAHETSACKAFIEQLKWFAGTQIRNVACIGGNICTASPISDLNPLWMASRAEFRITNCNGDVRSIPAKDFFLGYRKVDMGSNEILLSVFLPWTRPLEYVKEFKQAHRRDDDIAIVNGGMRVFLEDKGQQLFVSDASIAYGGVAPLSLCARKTEEFLIGKNWNKDLLQDALKVIQSDVVIKEDAPGGMVEFRKSLTLSFFFKFFLWVSHNVNNANSAIETFPPSHMSAVQPVPRLSRIGKQDYETVKQGTSVGSSEVHLSARMQVTGEAEYTDDTPVPPNTLHAAFVLSKVPHARILSIDDSAAKSSSGFVGLFLAKDIPGDNMIGPIVPDEELFATDVVTCVGQVIGVVVADTHENAKTAAGKVDVRYEELPAILSIKEAINAKSFHPNTEKRLRKGDVELCFQSGQCDRVIEGEVQMGGQEHFYLEPNGSLVWTVDGGSEVHMISSTQAPQKHQKYVSHVLGLPMSKVVCKTKRIGGGFGGKETRSAFIAAAASVPSYLLNRPVKLILDRDVDMMITGHRHSFLGKYKVGFTNEGKILALDLEIYNNGGNSLDLSLSVLERAMFHSDNVYEIPHVRIVGNVCFTNFPSNTAFRGFGGPQGMLITENWIQRIAAELNKSPEEIKEMNFQVEGSVTHYCQTLQHCTLHQLWKELKVSCNFLKARREADEFNSHNRWKKRGVAMVPTKFGISFTTKFMNQAGALVHVYTDGTVLVTHGGVEMGQGLHTKVAQVAASAFNIPLSSVFVSETSTDKVPNASPTAASASSDMYGAAVLDACEQIIARMEPVASKHNFNTFTELVSACYFQRIDLSAHGFHIVPDLGFDWISGKGNAFRYYTYGAAFAEVEIDTLTGDFHTRAADIMLDLGYSLNPAIDVGQIEGAFVQGLGWVALEELKWGDAAHKWIKPGSLLTCGPGNYKIPSINDMPFNLNVSLLKGNPNTKAIHSSKAVGEPPFFLASSVFFAIKEAIKAARTEVGLTDWFPLESPATPERIRMACFDEFSAPFVNSDFYPNLSV</sequence>
<comment type="function">
    <text evidence="4 5 6 7 8 9">Key enzyme involved in purine catabolism. Catalyzes the oxidation of hypoxanthine to xanthine and the oxidation of xanthine to urate. Regulates the level of ureides and plays an important role during plant growth and development, senescence and response to stresses. Possesses NADH oxidase activity and may contribute to the generation of superoxide anions in planta.</text>
</comment>
<comment type="catalytic activity">
    <reaction evidence="4">
        <text>xanthine + NAD(+) + H2O = urate + NADH + H(+)</text>
        <dbReference type="Rhea" id="RHEA:16669"/>
        <dbReference type="ChEBI" id="CHEBI:15377"/>
        <dbReference type="ChEBI" id="CHEBI:15378"/>
        <dbReference type="ChEBI" id="CHEBI:17712"/>
        <dbReference type="ChEBI" id="CHEBI:17775"/>
        <dbReference type="ChEBI" id="CHEBI:57540"/>
        <dbReference type="ChEBI" id="CHEBI:57945"/>
        <dbReference type="EC" id="1.17.1.4"/>
    </reaction>
</comment>
<comment type="catalytic activity">
    <reaction evidence="4">
        <text>hypoxanthine + NAD(+) + H2O = xanthine + NADH + H(+)</text>
        <dbReference type="Rhea" id="RHEA:24670"/>
        <dbReference type="ChEBI" id="CHEBI:15377"/>
        <dbReference type="ChEBI" id="CHEBI:15378"/>
        <dbReference type="ChEBI" id="CHEBI:17368"/>
        <dbReference type="ChEBI" id="CHEBI:17712"/>
        <dbReference type="ChEBI" id="CHEBI:57540"/>
        <dbReference type="ChEBI" id="CHEBI:57945"/>
        <dbReference type="EC" id="1.17.1.4"/>
    </reaction>
</comment>
<comment type="cofactor">
    <cofactor evidence="1">
        <name>[2Fe-2S] cluster</name>
        <dbReference type="ChEBI" id="CHEBI:190135"/>
    </cofactor>
    <text evidence="1">Binds 2 [2Fe-2S] clusters.</text>
</comment>
<comment type="cofactor">
    <cofactor evidence="1">
        <name>FAD</name>
        <dbReference type="ChEBI" id="CHEBI:57692"/>
    </cofactor>
</comment>
<comment type="cofactor">
    <cofactor evidence="1">
        <name>Mo-molybdopterin</name>
        <dbReference type="ChEBI" id="CHEBI:71302"/>
    </cofactor>
    <text evidence="1">Binds 1 Mo-molybdopterin (Mo-MPT) cofactor per subunit.</text>
</comment>
<comment type="subunit">
    <text evidence="11">Homodimer.</text>
</comment>
<comment type="tissue specificity">
    <text evidence="4">Expressed in roots, leaves, stems, flowers and siliques.</text>
</comment>
<comment type="induction">
    <text evidence="4 5">By salt and drought stresses, and abscisic (ABA) treatment. Down-regulated by cold and freezing stresses.</text>
</comment>
<comment type="miscellaneous">
    <text evidence="12">Plants silencing simultaneously XDH1 and XDH2 show reduced growth, impaired silique development, increased seed sterility, precocious senescence of mature leaves and overaccumulation of xanthine.</text>
</comment>
<comment type="similarity">
    <text evidence="10">Belongs to the xanthine dehydrogenase family.</text>
</comment>
<comment type="sequence caution" evidence="10">
    <conflict type="erroneous gene model prediction">
        <sequence resource="EMBL-CDS" id="CAB45450"/>
    </conflict>
</comment>
<comment type="sequence caution" evidence="10">
    <conflict type="erroneous gene model prediction">
        <sequence resource="EMBL-CDS" id="CAB80206"/>
    </conflict>
</comment>
<keyword id="KW-0001">2Fe-2S</keyword>
<keyword id="KW-0274">FAD</keyword>
<keyword id="KW-0285">Flavoprotein</keyword>
<keyword id="KW-0408">Iron</keyword>
<keyword id="KW-0411">Iron-sulfur</keyword>
<keyword id="KW-0479">Metal-binding</keyword>
<keyword id="KW-0500">Molybdenum</keyword>
<keyword id="KW-0520">NAD</keyword>
<keyword id="KW-0560">Oxidoreductase</keyword>
<keyword id="KW-1185">Reference proteome</keyword>
<dbReference type="EC" id="1.17.1.4" evidence="4"/>
<dbReference type="EMBL" id="AY171562">
    <property type="protein sequence ID" value="AAO11781.1"/>
    <property type="molecule type" value="mRNA"/>
</dbReference>
<dbReference type="EMBL" id="AL079347">
    <property type="protein sequence ID" value="CAB45450.1"/>
    <property type="status" value="ALT_SEQ"/>
    <property type="molecule type" value="Genomic_DNA"/>
</dbReference>
<dbReference type="EMBL" id="AL161586">
    <property type="protein sequence ID" value="CAB80206.1"/>
    <property type="status" value="ALT_SEQ"/>
    <property type="molecule type" value="Genomic_DNA"/>
</dbReference>
<dbReference type="EMBL" id="CP002687">
    <property type="protein sequence ID" value="AEE86434.1"/>
    <property type="molecule type" value="Genomic_DNA"/>
</dbReference>
<dbReference type="PIR" id="T10235">
    <property type="entry name" value="T10235"/>
</dbReference>
<dbReference type="RefSeq" id="NP_195215.2">
    <property type="nucleotide sequence ID" value="NM_119655.4"/>
</dbReference>
<dbReference type="SMR" id="Q8GUQ8"/>
<dbReference type="BioGRID" id="14923">
    <property type="interactions" value="2"/>
</dbReference>
<dbReference type="FunCoup" id="Q8GUQ8">
    <property type="interactions" value="2119"/>
</dbReference>
<dbReference type="STRING" id="3702.Q8GUQ8"/>
<dbReference type="iPTMnet" id="Q8GUQ8"/>
<dbReference type="PaxDb" id="3702-AT4G34890.1"/>
<dbReference type="ProteomicsDB" id="243096"/>
<dbReference type="EnsemblPlants" id="AT4G34890.1">
    <property type="protein sequence ID" value="AT4G34890.1"/>
    <property type="gene ID" value="AT4G34890"/>
</dbReference>
<dbReference type="GeneID" id="829641"/>
<dbReference type="Gramene" id="AT4G34890.1">
    <property type="protein sequence ID" value="AT4G34890.1"/>
    <property type="gene ID" value="AT4G34890"/>
</dbReference>
<dbReference type="KEGG" id="ath:AT4G34890"/>
<dbReference type="Araport" id="AT4G34890"/>
<dbReference type="TAIR" id="AT4G34890">
    <property type="gene designation" value="XDH1"/>
</dbReference>
<dbReference type="eggNOG" id="KOG0430">
    <property type="taxonomic scope" value="Eukaryota"/>
</dbReference>
<dbReference type="HOGENOM" id="CLU_001681_1_2_1"/>
<dbReference type="InParanoid" id="Q8GUQ8"/>
<dbReference type="OMA" id="PHPTQER"/>
<dbReference type="PhylomeDB" id="Q8GUQ8"/>
<dbReference type="BioCyc" id="ARA:AT4G34890-MONOMER"/>
<dbReference type="BioCyc" id="MetaCyc:AT4G34890-MONOMER"/>
<dbReference type="BRENDA" id="1.17.1.4">
    <property type="organism ID" value="399"/>
</dbReference>
<dbReference type="PRO" id="PR:Q8GUQ8"/>
<dbReference type="Proteomes" id="UP000006548">
    <property type="component" value="Chromosome 4"/>
</dbReference>
<dbReference type="ExpressionAtlas" id="Q8GUQ8">
    <property type="expression patterns" value="baseline and differential"/>
</dbReference>
<dbReference type="GO" id="GO:0005886">
    <property type="term" value="C:plasma membrane"/>
    <property type="evidence" value="ECO:0007005"/>
    <property type="project" value="TAIR"/>
</dbReference>
<dbReference type="GO" id="GO:0051537">
    <property type="term" value="F:2 iron, 2 sulfur cluster binding"/>
    <property type="evidence" value="ECO:0007669"/>
    <property type="project" value="UniProtKB-KW"/>
</dbReference>
<dbReference type="GO" id="GO:0071949">
    <property type="term" value="F:FAD binding"/>
    <property type="evidence" value="ECO:0007669"/>
    <property type="project" value="InterPro"/>
</dbReference>
<dbReference type="GO" id="GO:0005506">
    <property type="term" value="F:iron ion binding"/>
    <property type="evidence" value="ECO:0007669"/>
    <property type="project" value="InterPro"/>
</dbReference>
<dbReference type="GO" id="GO:0004854">
    <property type="term" value="F:xanthine dehydrogenase activity"/>
    <property type="evidence" value="ECO:0000314"/>
    <property type="project" value="TAIR"/>
</dbReference>
<dbReference type="GO" id="GO:0006145">
    <property type="term" value="P:purine nucleobase catabolic process"/>
    <property type="evidence" value="ECO:0000315"/>
    <property type="project" value="TAIR"/>
</dbReference>
<dbReference type="GO" id="GO:0000302">
    <property type="term" value="P:response to reactive oxygen species"/>
    <property type="evidence" value="ECO:0000315"/>
    <property type="project" value="TAIR"/>
</dbReference>
<dbReference type="GO" id="GO:0009414">
    <property type="term" value="P:response to water deprivation"/>
    <property type="evidence" value="ECO:0000315"/>
    <property type="project" value="TAIR"/>
</dbReference>
<dbReference type="GO" id="GO:0042554">
    <property type="term" value="P:superoxide anion generation"/>
    <property type="evidence" value="ECO:0000315"/>
    <property type="project" value="TAIR"/>
</dbReference>
<dbReference type="GO" id="GO:0046110">
    <property type="term" value="P:xanthine metabolic process"/>
    <property type="evidence" value="ECO:0000315"/>
    <property type="project" value="TAIR"/>
</dbReference>
<dbReference type="FunFam" id="3.10.20.30:FF:000015">
    <property type="entry name" value="Aldehyde oxidase 1"/>
    <property type="match status" value="1"/>
</dbReference>
<dbReference type="FunFam" id="3.30.365.10:FF:000003">
    <property type="entry name" value="Aldehyde oxidase 1"/>
    <property type="match status" value="1"/>
</dbReference>
<dbReference type="FunFam" id="3.90.1170.50:FF:000001">
    <property type="entry name" value="Aldehyde oxidase 1"/>
    <property type="match status" value="1"/>
</dbReference>
<dbReference type="FunFam" id="1.10.150.120:FF:000012">
    <property type="entry name" value="Xanthine dehydrogenase 2"/>
    <property type="match status" value="1"/>
</dbReference>
<dbReference type="FunFam" id="3.30.365.10:FF:000004">
    <property type="entry name" value="Xanthine dehydrogenase oxidase"/>
    <property type="match status" value="1"/>
</dbReference>
<dbReference type="FunFam" id="3.30.390.50:FF:000001">
    <property type="entry name" value="Xanthine dehydrogenase oxidase"/>
    <property type="match status" value="1"/>
</dbReference>
<dbReference type="FunFam" id="3.30.43.10:FF:000001">
    <property type="entry name" value="Xanthine dehydrogenase/oxidase"/>
    <property type="match status" value="1"/>
</dbReference>
<dbReference type="FunFam" id="3.30.465.10:FF:000004">
    <property type="entry name" value="Xanthine dehydrogenase/oxidase"/>
    <property type="match status" value="1"/>
</dbReference>
<dbReference type="Gene3D" id="3.10.20.30">
    <property type="match status" value="1"/>
</dbReference>
<dbReference type="Gene3D" id="3.30.465.10">
    <property type="match status" value="1"/>
</dbReference>
<dbReference type="Gene3D" id="1.10.150.120">
    <property type="entry name" value="[2Fe-2S]-binding domain"/>
    <property type="match status" value="1"/>
</dbReference>
<dbReference type="Gene3D" id="3.90.1170.50">
    <property type="entry name" value="Aldehyde oxidase/xanthine dehydrogenase, a/b hammerhead"/>
    <property type="match status" value="1"/>
</dbReference>
<dbReference type="Gene3D" id="3.30.365.10">
    <property type="entry name" value="Aldehyde oxidase/xanthine dehydrogenase, molybdopterin binding domain"/>
    <property type="match status" value="4"/>
</dbReference>
<dbReference type="Gene3D" id="3.30.390.50">
    <property type="entry name" value="CO dehydrogenase flavoprotein, C-terminal domain"/>
    <property type="match status" value="1"/>
</dbReference>
<dbReference type="Gene3D" id="3.30.43.10">
    <property type="entry name" value="Uridine Diphospho-n-acetylenolpyruvylglucosamine Reductase, domain 2"/>
    <property type="match status" value="1"/>
</dbReference>
<dbReference type="InterPro" id="IPR002888">
    <property type="entry name" value="2Fe-2S-bd"/>
</dbReference>
<dbReference type="InterPro" id="IPR036884">
    <property type="entry name" value="2Fe-2S-bd_dom_sf"/>
</dbReference>
<dbReference type="InterPro" id="IPR036010">
    <property type="entry name" value="2Fe-2S_ferredoxin-like_sf"/>
</dbReference>
<dbReference type="InterPro" id="IPR001041">
    <property type="entry name" value="2Fe-2S_ferredoxin-type"/>
</dbReference>
<dbReference type="InterPro" id="IPR006058">
    <property type="entry name" value="2Fe2S_fd_BS"/>
</dbReference>
<dbReference type="InterPro" id="IPR000674">
    <property type="entry name" value="Ald_Oxase/Xan_DH_a/b"/>
</dbReference>
<dbReference type="InterPro" id="IPR036856">
    <property type="entry name" value="Ald_Oxase/Xan_DH_a/b_sf"/>
</dbReference>
<dbReference type="InterPro" id="IPR016208">
    <property type="entry name" value="Ald_Oxase/xanthine_DH-like"/>
</dbReference>
<dbReference type="InterPro" id="IPR008274">
    <property type="entry name" value="AldOxase/xan_DH_MoCoBD1"/>
</dbReference>
<dbReference type="InterPro" id="IPR046867">
    <property type="entry name" value="AldOxase/xan_DH_MoCoBD2"/>
</dbReference>
<dbReference type="InterPro" id="IPR037165">
    <property type="entry name" value="AldOxase/xan_DH_Mopterin-bd_sf"/>
</dbReference>
<dbReference type="InterPro" id="IPR012675">
    <property type="entry name" value="Beta-grasp_dom_sf"/>
</dbReference>
<dbReference type="InterPro" id="IPR005107">
    <property type="entry name" value="CO_DH_flav_C"/>
</dbReference>
<dbReference type="InterPro" id="IPR036683">
    <property type="entry name" value="CO_DH_flav_C_dom_sf"/>
</dbReference>
<dbReference type="InterPro" id="IPR016166">
    <property type="entry name" value="FAD-bd_PCMH"/>
</dbReference>
<dbReference type="InterPro" id="IPR036318">
    <property type="entry name" value="FAD-bd_PCMH-like_sf"/>
</dbReference>
<dbReference type="InterPro" id="IPR016167">
    <property type="entry name" value="FAD-bd_PCMH_sub1"/>
</dbReference>
<dbReference type="InterPro" id="IPR016169">
    <property type="entry name" value="FAD-bd_PCMH_sub2"/>
</dbReference>
<dbReference type="InterPro" id="IPR002346">
    <property type="entry name" value="Mopterin_DH_FAD-bd"/>
</dbReference>
<dbReference type="PANTHER" id="PTHR45444">
    <property type="entry name" value="XANTHINE DEHYDROGENASE"/>
    <property type="match status" value="1"/>
</dbReference>
<dbReference type="PANTHER" id="PTHR45444:SF3">
    <property type="entry name" value="XANTHINE DEHYDROGENASE"/>
    <property type="match status" value="1"/>
</dbReference>
<dbReference type="Pfam" id="PF01315">
    <property type="entry name" value="Ald_Xan_dh_C"/>
    <property type="match status" value="1"/>
</dbReference>
<dbReference type="Pfam" id="PF03450">
    <property type="entry name" value="CO_deh_flav_C"/>
    <property type="match status" value="1"/>
</dbReference>
<dbReference type="Pfam" id="PF00941">
    <property type="entry name" value="FAD_binding_5"/>
    <property type="match status" value="1"/>
</dbReference>
<dbReference type="Pfam" id="PF00111">
    <property type="entry name" value="Fer2"/>
    <property type="match status" value="1"/>
</dbReference>
<dbReference type="Pfam" id="PF01799">
    <property type="entry name" value="Fer2_2"/>
    <property type="match status" value="1"/>
</dbReference>
<dbReference type="Pfam" id="PF02738">
    <property type="entry name" value="MoCoBD_1"/>
    <property type="match status" value="1"/>
</dbReference>
<dbReference type="Pfam" id="PF20256">
    <property type="entry name" value="MoCoBD_2"/>
    <property type="match status" value="1"/>
</dbReference>
<dbReference type="PIRSF" id="PIRSF000127">
    <property type="entry name" value="Xanthine_DH"/>
    <property type="match status" value="1"/>
</dbReference>
<dbReference type="SMART" id="SM01008">
    <property type="entry name" value="Ald_Xan_dh_C"/>
    <property type="match status" value="1"/>
</dbReference>
<dbReference type="SMART" id="SM01092">
    <property type="entry name" value="CO_deh_flav_C"/>
    <property type="match status" value="1"/>
</dbReference>
<dbReference type="SUPFAM" id="SSF54292">
    <property type="entry name" value="2Fe-2S ferredoxin-like"/>
    <property type="match status" value="1"/>
</dbReference>
<dbReference type="SUPFAM" id="SSF55447">
    <property type="entry name" value="CO dehydrogenase flavoprotein C-terminal domain-like"/>
    <property type="match status" value="1"/>
</dbReference>
<dbReference type="SUPFAM" id="SSF47741">
    <property type="entry name" value="CO dehydrogenase ISP C-domain like"/>
    <property type="match status" value="1"/>
</dbReference>
<dbReference type="SUPFAM" id="SSF54665">
    <property type="entry name" value="CO dehydrogenase molybdoprotein N-domain-like"/>
    <property type="match status" value="1"/>
</dbReference>
<dbReference type="SUPFAM" id="SSF56176">
    <property type="entry name" value="FAD-binding/transporter-associated domain-like"/>
    <property type="match status" value="1"/>
</dbReference>
<dbReference type="SUPFAM" id="SSF56003">
    <property type="entry name" value="Molybdenum cofactor-binding domain"/>
    <property type="match status" value="1"/>
</dbReference>
<dbReference type="PROSITE" id="PS00197">
    <property type="entry name" value="2FE2S_FER_1"/>
    <property type="match status" value="1"/>
</dbReference>
<dbReference type="PROSITE" id="PS51085">
    <property type="entry name" value="2FE2S_FER_2"/>
    <property type="match status" value="1"/>
</dbReference>
<dbReference type="PROSITE" id="PS51387">
    <property type="entry name" value="FAD_PCMH"/>
    <property type="match status" value="1"/>
</dbReference>
<name>XDH1_ARATH</name>
<proteinExistence type="evidence at protein level"/>
<accession>Q8GUQ8</accession>
<accession>Q9SW46</accession>
<reference key="1">
    <citation type="journal article" date="2004" name="J. Biol. Chem.">
        <title>Tandem orientation of duplicated xanthine dehydrogenase genes from Arabidopsis thaliana: differential gene expression and enzyme activities.</title>
        <authorList>
            <person name="Hesberg C."/>
            <person name="Haensch R."/>
            <person name="Mendel R.R."/>
            <person name="Bittner F."/>
        </authorList>
    </citation>
    <scope>NUCLEOTIDE SEQUENCE [MRNA]</scope>
    <scope>FUNCTION</scope>
    <scope>CATALYTIC ACTIVITY</scope>
    <scope>SUBUNIT</scope>
    <scope>TISSUE SPECIFICITY</scope>
    <scope>INDUCTION</scope>
</reference>
<reference key="2">
    <citation type="journal article" date="1999" name="Nature">
        <title>Sequence and analysis of chromosome 4 of the plant Arabidopsis thaliana.</title>
        <authorList>
            <person name="Mayer K.F.X."/>
            <person name="Schueller C."/>
            <person name="Wambutt R."/>
            <person name="Murphy G."/>
            <person name="Volckaert G."/>
            <person name="Pohl T."/>
            <person name="Duesterhoeft A."/>
            <person name="Stiekema W."/>
            <person name="Entian K.-D."/>
            <person name="Terryn N."/>
            <person name="Harris B."/>
            <person name="Ansorge W."/>
            <person name="Brandt P."/>
            <person name="Grivell L.A."/>
            <person name="Rieger M."/>
            <person name="Weichselgartner M."/>
            <person name="de Simone V."/>
            <person name="Obermaier B."/>
            <person name="Mache R."/>
            <person name="Mueller M."/>
            <person name="Kreis M."/>
            <person name="Delseny M."/>
            <person name="Puigdomenech P."/>
            <person name="Watson M."/>
            <person name="Schmidtheini T."/>
            <person name="Reichert B."/>
            <person name="Portetelle D."/>
            <person name="Perez-Alonso M."/>
            <person name="Boutry M."/>
            <person name="Bancroft I."/>
            <person name="Vos P."/>
            <person name="Hoheisel J."/>
            <person name="Zimmermann W."/>
            <person name="Wedler H."/>
            <person name="Ridley P."/>
            <person name="Langham S.-A."/>
            <person name="McCullagh B."/>
            <person name="Bilham L."/>
            <person name="Robben J."/>
            <person name="van der Schueren J."/>
            <person name="Grymonprez B."/>
            <person name="Chuang Y.-J."/>
            <person name="Vandenbussche F."/>
            <person name="Braeken M."/>
            <person name="Weltjens I."/>
            <person name="Voet M."/>
            <person name="Bastiaens I."/>
            <person name="Aert R."/>
            <person name="Defoor E."/>
            <person name="Weitzenegger T."/>
            <person name="Bothe G."/>
            <person name="Ramsperger U."/>
            <person name="Hilbert H."/>
            <person name="Braun M."/>
            <person name="Holzer E."/>
            <person name="Brandt A."/>
            <person name="Peters S."/>
            <person name="van Staveren M."/>
            <person name="Dirkse W."/>
            <person name="Mooijman P."/>
            <person name="Klein Lankhorst R."/>
            <person name="Rose M."/>
            <person name="Hauf J."/>
            <person name="Koetter P."/>
            <person name="Berneiser S."/>
            <person name="Hempel S."/>
            <person name="Feldpausch M."/>
            <person name="Lamberth S."/>
            <person name="Van den Daele H."/>
            <person name="De Keyser A."/>
            <person name="Buysshaert C."/>
            <person name="Gielen J."/>
            <person name="Villarroel R."/>
            <person name="De Clercq R."/>
            <person name="van Montagu M."/>
            <person name="Rogers J."/>
            <person name="Cronin A."/>
            <person name="Quail M.A."/>
            <person name="Bray-Allen S."/>
            <person name="Clark L."/>
            <person name="Doggett J."/>
            <person name="Hall S."/>
            <person name="Kay M."/>
            <person name="Lennard N."/>
            <person name="McLay K."/>
            <person name="Mayes R."/>
            <person name="Pettett A."/>
            <person name="Rajandream M.A."/>
            <person name="Lyne M."/>
            <person name="Benes V."/>
            <person name="Rechmann S."/>
            <person name="Borkova D."/>
            <person name="Bloecker H."/>
            <person name="Scharfe M."/>
            <person name="Grimm M."/>
            <person name="Loehnert T.-H."/>
            <person name="Dose S."/>
            <person name="de Haan M."/>
            <person name="Maarse A.C."/>
            <person name="Schaefer M."/>
            <person name="Mueller-Auer S."/>
            <person name="Gabel C."/>
            <person name="Fuchs M."/>
            <person name="Fartmann B."/>
            <person name="Granderath K."/>
            <person name="Dauner D."/>
            <person name="Herzl A."/>
            <person name="Neumann S."/>
            <person name="Argiriou A."/>
            <person name="Vitale D."/>
            <person name="Liguori R."/>
            <person name="Piravandi E."/>
            <person name="Massenet O."/>
            <person name="Quigley F."/>
            <person name="Clabauld G."/>
            <person name="Muendlein A."/>
            <person name="Felber R."/>
            <person name="Schnabl S."/>
            <person name="Hiller R."/>
            <person name="Schmidt W."/>
            <person name="Lecharny A."/>
            <person name="Aubourg S."/>
            <person name="Chefdor F."/>
            <person name="Cooke R."/>
            <person name="Berger C."/>
            <person name="Monfort A."/>
            <person name="Casacuberta E."/>
            <person name="Gibbons T."/>
            <person name="Weber N."/>
            <person name="Vandenbol M."/>
            <person name="Bargues M."/>
            <person name="Terol J."/>
            <person name="Torres A."/>
            <person name="Perez-Perez A."/>
            <person name="Purnelle B."/>
            <person name="Bent E."/>
            <person name="Johnson S."/>
            <person name="Tacon D."/>
            <person name="Jesse T."/>
            <person name="Heijnen L."/>
            <person name="Schwarz S."/>
            <person name="Scholler P."/>
            <person name="Heber S."/>
            <person name="Francs P."/>
            <person name="Bielke C."/>
            <person name="Frishman D."/>
            <person name="Haase D."/>
            <person name="Lemcke K."/>
            <person name="Mewes H.-W."/>
            <person name="Stocker S."/>
            <person name="Zaccaria P."/>
            <person name="Bevan M."/>
            <person name="Wilson R.K."/>
            <person name="de la Bastide M."/>
            <person name="Habermann K."/>
            <person name="Parnell L."/>
            <person name="Dedhia N."/>
            <person name="Gnoj L."/>
            <person name="Schutz K."/>
            <person name="Huang E."/>
            <person name="Spiegel L."/>
            <person name="Sekhon M."/>
            <person name="Murray J."/>
            <person name="Sheet P."/>
            <person name="Cordes M."/>
            <person name="Abu-Threideh J."/>
            <person name="Stoneking T."/>
            <person name="Kalicki J."/>
            <person name="Graves T."/>
            <person name="Harmon G."/>
            <person name="Edwards J."/>
            <person name="Latreille P."/>
            <person name="Courtney L."/>
            <person name="Cloud J."/>
            <person name="Abbott A."/>
            <person name="Scott K."/>
            <person name="Johnson D."/>
            <person name="Minx P."/>
            <person name="Bentley D."/>
            <person name="Fulton B."/>
            <person name="Miller N."/>
            <person name="Greco T."/>
            <person name="Kemp K."/>
            <person name="Kramer J."/>
            <person name="Fulton L."/>
            <person name="Mardis E."/>
            <person name="Dante M."/>
            <person name="Pepin K."/>
            <person name="Hillier L.W."/>
            <person name="Nelson J."/>
            <person name="Spieth J."/>
            <person name="Ryan E."/>
            <person name="Andrews S."/>
            <person name="Geisel C."/>
            <person name="Layman D."/>
            <person name="Du H."/>
            <person name="Ali J."/>
            <person name="Berghoff A."/>
            <person name="Jones K."/>
            <person name="Drone K."/>
            <person name="Cotton M."/>
            <person name="Joshu C."/>
            <person name="Antonoiu B."/>
            <person name="Zidanic M."/>
            <person name="Strong C."/>
            <person name="Sun H."/>
            <person name="Lamar B."/>
            <person name="Yordan C."/>
            <person name="Ma P."/>
            <person name="Zhong J."/>
            <person name="Preston R."/>
            <person name="Vil D."/>
            <person name="Shekher M."/>
            <person name="Matero A."/>
            <person name="Shah R."/>
            <person name="Swaby I.K."/>
            <person name="O'Shaughnessy A."/>
            <person name="Rodriguez M."/>
            <person name="Hoffman J."/>
            <person name="Till S."/>
            <person name="Granat S."/>
            <person name="Shohdy N."/>
            <person name="Hasegawa A."/>
            <person name="Hameed A."/>
            <person name="Lodhi M."/>
            <person name="Johnson A."/>
            <person name="Chen E."/>
            <person name="Marra M.A."/>
            <person name="Martienssen R."/>
            <person name="McCombie W.R."/>
        </authorList>
    </citation>
    <scope>NUCLEOTIDE SEQUENCE [LARGE SCALE GENOMIC DNA]</scope>
    <source>
        <strain>cv. Columbia</strain>
    </source>
</reference>
<reference key="3">
    <citation type="journal article" date="2017" name="Plant J.">
        <title>Araport11: a complete reannotation of the Arabidopsis thaliana reference genome.</title>
        <authorList>
            <person name="Cheng C.Y."/>
            <person name="Krishnakumar V."/>
            <person name="Chan A.P."/>
            <person name="Thibaud-Nissen F."/>
            <person name="Schobel S."/>
            <person name="Town C.D."/>
        </authorList>
    </citation>
    <scope>GENOME REANNOTATION</scope>
    <source>
        <strain>cv. Columbia</strain>
    </source>
</reference>
<reference key="4">
    <citation type="journal article" date="2005" name="Plant J.">
        <title>The plant Mo-hydroxylases aldehyde oxidase and xanthine dehydrogenase have distinct reactive oxygen species signatures and are induced by drought and abscisic acid.</title>
        <authorList>
            <person name="Yesbergenova Z."/>
            <person name="Yang G."/>
            <person name="Oron E."/>
            <person name="Soffer D."/>
            <person name="Fluhr R."/>
            <person name="Sagi M."/>
        </authorList>
    </citation>
    <scope>FUNCTION</scope>
    <scope>INDUCTION</scope>
</reference>
<reference key="5">
    <citation type="journal article" date="2007" name="Plant Cell Physiol.">
        <title>The RNAi-mediated silencing of xanthine dehydrogenase impairs growth and fertility and accelerates leaf senescence in transgenic Arabidopsis plants.</title>
        <authorList>
            <person name="Nakagawa A."/>
            <person name="Sakamoto S."/>
            <person name="Takahashi M."/>
            <person name="Morikawa H."/>
            <person name="Sakamoto A."/>
        </authorList>
    </citation>
    <scope>FUNCTION</scope>
</reference>
<reference key="6">
    <citation type="journal article" date="2008" name="Plant J.">
        <title>A critical role for ureides in dark and senescence-induced purine remobilization is unmasked in the Atxdh1 Arabidopsis mutant.</title>
        <authorList>
            <person name="Brychkova G."/>
            <person name="Alikulov Z."/>
            <person name="Fluhr R."/>
            <person name="Sagi M."/>
        </authorList>
    </citation>
    <scope>FUNCTION</scope>
</reference>
<reference key="7">
    <citation type="journal article" date="2010" name="FEBS Lett.">
        <title>RNA interference-mediated suppression of xanthine dehydrogenase reveals the role of purine metabolism in drought tolerance in Arabidopsis.</title>
        <authorList>
            <person name="Watanabe S."/>
            <person name="Nakagawa A."/>
            <person name="Izumi S."/>
            <person name="Shimada H."/>
            <person name="Sakamoto A."/>
        </authorList>
    </citation>
    <scope>FUNCTION</scope>
</reference>
<reference key="8">
    <citation type="journal article" date="2010" name="Plant Mol. Biol.">
        <title>Xanthine dehydrogenase AtXDH1 from Arabidopsis thaliana is a potent producer of superoxide anions via its NADH oxidase activity.</title>
        <authorList>
            <person name="Zarepour M."/>
            <person name="Kaspari K."/>
            <person name="Stagge S."/>
            <person name="Rethmeier R."/>
            <person name="Mendel R.R."/>
            <person name="Bittner F."/>
        </authorList>
    </citation>
    <scope>FUNCTION</scope>
    <scope>MUTAGENESIS OF TRP-364; TYR-421; GLU-831; ARG-909 AND GLU-1297</scope>
</reference>
<evidence type="ECO:0000250" key="1"/>
<evidence type="ECO:0000255" key="2">
    <source>
        <dbReference type="PROSITE-ProRule" id="PRU00465"/>
    </source>
</evidence>
<evidence type="ECO:0000255" key="3">
    <source>
        <dbReference type="PROSITE-ProRule" id="PRU00718"/>
    </source>
</evidence>
<evidence type="ECO:0000269" key="4">
    <source>
    </source>
</evidence>
<evidence type="ECO:0000269" key="5">
    <source>
    </source>
</evidence>
<evidence type="ECO:0000269" key="6">
    <source>
    </source>
</evidence>
<evidence type="ECO:0000269" key="7">
    <source>
    </source>
</evidence>
<evidence type="ECO:0000269" key="8">
    <source>
    </source>
</evidence>
<evidence type="ECO:0000269" key="9">
    <source>
    </source>
</evidence>
<evidence type="ECO:0000305" key="10"/>
<evidence type="ECO:0000305" key="11">
    <source>
    </source>
</evidence>
<evidence type="ECO:0000305" key="12">
    <source>
    </source>
</evidence>